<proteinExistence type="inferred from homology"/>
<evidence type="ECO:0000255" key="1">
    <source>
        <dbReference type="HAMAP-Rule" id="MF_01621"/>
    </source>
</evidence>
<dbReference type="EC" id="4.2.1.17" evidence="1"/>
<dbReference type="EC" id="5.1.2.3" evidence="1"/>
<dbReference type="EC" id="5.3.3.8" evidence="1"/>
<dbReference type="EC" id="1.1.1.35" evidence="1"/>
<dbReference type="EMBL" id="AE014299">
    <property type="protein sequence ID" value="AAN53108.1"/>
    <property type="molecule type" value="Genomic_DNA"/>
</dbReference>
<dbReference type="RefSeq" id="NP_715663.1">
    <property type="nucleotide sequence ID" value="NC_004347.2"/>
</dbReference>
<dbReference type="RefSeq" id="WP_011070437.1">
    <property type="nucleotide sequence ID" value="NC_004347.2"/>
</dbReference>
<dbReference type="SMR" id="Q8EKR9"/>
<dbReference type="STRING" id="211586.SO_0021"/>
<dbReference type="PaxDb" id="211586-SO_0021"/>
<dbReference type="KEGG" id="son:SO_0021"/>
<dbReference type="PATRIC" id="fig|211586.12.peg.21"/>
<dbReference type="eggNOG" id="COG1024">
    <property type="taxonomic scope" value="Bacteria"/>
</dbReference>
<dbReference type="eggNOG" id="COG1250">
    <property type="taxonomic scope" value="Bacteria"/>
</dbReference>
<dbReference type="HOGENOM" id="CLU_009834_16_3_6"/>
<dbReference type="OrthoDB" id="5389341at2"/>
<dbReference type="PhylomeDB" id="Q8EKR9"/>
<dbReference type="BioCyc" id="SONE211586:G1GMP-21-MONOMER"/>
<dbReference type="UniPathway" id="UPA00659"/>
<dbReference type="Proteomes" id="UP000008186">
    <property type="component" value="Chromosome"/>
</dbReference>
<dbReference type="GO" id="GO:0036125">
    <property type="term" value="C:fatty acid beta-oxidation multienzyme complex"/>
    <property type="evidence" value="ECO:0007669"/>
    <property type="project" value="InterPro"/>
</dbReference>
<dbReference type="GO" id="GO:0008692">
    <property type="term" value="F:3-hydroxybutyryl-CoA epimerase activity"/>
    <property type="evidence" value="ECO:0007669"/>
    <property type="project" value="UniProtKB-UniRule"/>
</dbReference>
<dbReference type="GO" id="GO:0004165">
    <property type="term" value="F:delta(3)-delta(2)-enoyl-CoA isomerase activity"/>
    <property type="evidence" value="ECO:0007669"/>
    <property type="project" value="UniProtKB-UniRule"/>
</dbReference>
<dbReference type="GO" id="GO:0004300">
    <property type="term" value="F:enoyl-CoA hydratase activity"/>
    <property type="evidence" value="ECO:0000318"/>
    <property type="project" value="GO_Central"/>
</dbReference>
<dbReference type="GO" id="GO:0016509">
    <property type="term" value="F:long-chain-3-hydroxyacyl-CoA dehydrogenase activity"/>
    <property type="evidence" value="ECO:0000318"/>
    <property type="project" value="GO_Central"/>
</dbReference>
<dbReference type="GO" id="GO:0070403">
    <property type="term" value="F:NAD+ binding"/>
    <property type="evidence" value="ECO:0007669"/>
    <property type="project" value="InterPro"/>
</dbReference>
<dbReference type="GO" id="GO:0006635">
    <property type="term" value="P:fatty acid beta-oxidation"/>
    <property type="evidence" value="ECO:0000318"/>
    <property type="project" value="GO_Central"/>
</dbReference>
<dbReference type="CDD" id="cd06558">
    <property type="entry name" value="crotonase-like"/>
    <property type="match status" value="1"/>
</dbReference>
<dbReference type="FunFam" id="1.10.1040.50:FF:000001">
    <property type="entry name" value="Fatty acid oxidation complex subunit alpha"/>
    <property type="match status" value="1"/>
</dbReference>
<dbReference type="FunFam" id="3.40.50.720:FF:000009">
    <property type="entry name" value="Fatty oxidation complex, alpha subunit"/>
    <property type="match status" value="1"/>
</dbReference>
<dbReference type="Gene3D" id="1.10.1040.50">
    <property type="match status" value="1"/>
</dbReference>
<dbReference type="Gene3D" id="3.90.226.10">
    <property type="entry name" value="2-enoyl-CoA Hydratase, Chain A, domain 1"/>
    <property type="match status" value="1"/>
</dbReference>
<dbReference type="Gene3D" id="3.40.50.720">
    <property type="entry name" value="NAD(P)-binding Rossmann-like Domain"/>
    <property type="match status" value="1"/>
</dbReference>
<dbReference type="HAMAP" id="MF_01621">
    <property type="entry name" value="FadB"/>
    <property type="match status" value="1"/>
</dbReference>
<dbReference type="InterPro" id="IPR006180">
    <property type="entry name" value="3-OHacyl-CoA_DH_CS"/>
</dbReference>
<dbReference type="InterPro" id="IPR006176">
    <property type="entry name" value="3-OHacyl-CoA_DH_NAD-bd"/>
</dbReference>
<dbReference type="InterPro" id="IPR006108">
    <property type="entry name" value="3HC_DH_C"/>
</dbReference>
<dbReference type="InterPro" id="IPR008927">
    <property type="entry name" value="6-PGluconate_DH-like_C_sf"/>
</dbReference>
<dbReference type="InterPro" id="IPR029045">
    <property type="entry name" value="ClpP/crotonase-like_dom_sf"/>
</dbReference>
<dbReference type="InterPro" id="IPR001753">
    <property type="entry name" value="Enoyl-CoA_hydra/iso"/>
</dbReference>
<dbReference type="InterPro" id="IPR050136">
    <property type="entry name" value="FA_oxidation_alpha_subunit"/>
</dbReference>
<dbReference type="InterPro" id="IPR012799">
    <property type="entry name" value="FadB"/>
</dbReference>
<dbReference type="InterPro" id="IPR036291">
    <property type="entry name" value="NAD(P)-bd_dom_sf"/>
</dbReference>
<dbReference type="NCBIfam" id="TIGR02437">
    <property type="entry name" value="FadB"/>
    <property type="match status" value="1"/>
</dbReference>
<dbReference type="NCBIfam" id="NF008727">
    <property type="entry name" value="PRK11730.1"/>
    <property type="match status" value="1"/>
</dbReference>
<dbReference type="PANTHER" id="PTHR43612">
    <property type="entry name" value="TRIFUNCTIONAL ENZYME SUBUNIT ALPHA"/>
    <property type="match status" value="1"/>
</dbReference>
<dbReference type="PANTHER" id="PTHR43612:SF3">
    <property type="entry name" value="TRIFUNCTIONAL ENZYME SUBUNIT ALPHA, MITOCHONDRIAL"/>
    <property type="match status" value="1"/>
</dbReference>
<dbReference type="Pfam" id="PF00725">
    <property type="entry name" value="3HCDH"/>
    <property type="match status" value="1"/>
</dbReference>
<dbReference type="Pfam" id="PF02737">
    <property type="entry name" value="3HCDH_N"/>
    <property type="match status" value="1"/>
</dbReference>
<dbReference type="Pfam" id="PF00378">
    <property type="entry name" value="ECH_1"/>
    <property type="match status" value="1"/>
</dbReference>
<dbReference type="SUPFAM" id="SSF48179">
    <property type="entry name" value="6-phosphogluconate dehydrogenase C-terminal domain-like"/>
    <property type="match status" value="2"/>
</dbReference>
<dbReference type="SUPFAM" id="SSF52096">
    <property type="entry name" value="ClpP/crotonase"/>
    <property type="match status" value="1"/>
</dbReference>
<dbReference type="SUPFAM" id="SSF51735">
    <property type="entry name" value="NAD(P)-binding Rossmann-fold domains"/>
    <property type="match status" value="1"/>
</dbReference>
<dbReference type="PROSITE" id="PS00067">
    <property type="entry name" value="3HCDH"/>
    <property type="match status" value="1"/>
</dbReference>
<gene>
    <name evidence="1" type="primary">fadB</name>
    <name type="ordered locus">SO_0021</name>
</gene>
<sequence>MIYQSPTIQVELLEDNIAKLCFNAPGSVNKFDRETLASLDAALDSIKQQSNIQALVLTSGKDTFIVGADITEFLGLFAQDDAVLLSWVEQANAVFNKLEDLPFPTASAIKGFALGGGCETILATDFRIADTTAKIGLPETKLGIIPGFGGTVRLPRVIGADNALEWITTGNEQRAEDALKVGAVDAVVAPEALEVAAIQMLKDAVAEKLDWQARRQRKLSPLTLPKLEAMMSFTTAKGMVFSVAGKHYPAPMAAVNVVEQAATKGRSDALQIEHQAFIKLAKTDVAKALIGIFLNDQFVKGKAKKAGKLAKAVNSAAVLGAGIMGGGIAYQSASKGTPIVMKDIAQPALDLGLNEAAKLLSAQVARGRSTPEKMAKVLNNITPALEYAPVKHADVVVEAVVEHPKVKAQVLAEVEQYVSEDAIIASNTSTISISLLAKSMKKPERFCGMHFFNPVHKMPLVEVIRGEHSSEETIASVVAYASKMGKTPIVVNDCPGFFVNRVLFPYFAGFNGLLAEGGDFAAIDKVMEKQFGWPMGPAYLLDVVGLDTGHHAQAVMAEGFPDRMGKSGNDAIDVMFENKRLGQKNGKGFYAYSVDSRGKPKKDVDPTSYELLKAAFGEQKAFDADEIIARTMIPMIIETVRCLEEGIVASPAEADMGLVYGLGFPPFRGGVFRYLDTMGVANFVALADKYAHLGGLYQVTDAMRALAANNGSYYQA</sequence>
<reference key="1">
    <citation type="journal article" date="2002" name="Nat. Biotechnol.">
        <title>Genome sequence of the dissimilatory metal ion-reducing bacterium Shewanella oneidensis.</title>
        <authorList>
            <person name="Heidelberg J.F."/>
            <person name="Paulsen I.T."/>
            <person name="Nelson K.E."/>
            <person name="Gaidos E.J."/>
            <person name="Nelson W.C."/>
            <person name="Read T.D."/>
            <person name="Eisen J.A."/>
            <person name="Seshadri R."/>
            <person name="Ward N.L."/>
            <person name="Methe B.A."/>
            <person name="Clayton R.A."/>
            <person name="Meyer T."/>
            <person name="Tsapin A."/>
            <person name="Scott J."/>
            <person name="Beanan M.J."/>
            <person name="Brinkac L.M."/>
            <person name="Daugherty S.C."/>
            <person name="DeBoy R.T."/>
            <person name="Dodson R.J."/>
            <person name="Durkin A.S."/>
            <person name="Haft D.H."/>
            <person name="Kolonay J.F."/>
            <person name="Madupu R."/>
            <person name="Peterson J.D."/>
            <person name="Umayam L.A."/>
            <person name="White O."/>
            <person name="Wolf A.M."/>
            <person name="Vamathevan J.J."/>
            <person name="Weidman J.F."/>
            <person name="Impraim M."/>
            <person name="Lee K."/>
            <person name="Berry K.J."/>
            <person name="Lee C."/>
            <person name="Mueller J."/>
            <person name="Khouri H.M."/>
            <person name="Gill J."/>
            <person name="Utterback T.R."/>
            <person name="McDonald L.A."/>
            <person name="Feldblyum T.V."/>
            <person name="Smith H.O."/>
            <person name="Venter J.C."/>
            <person name="Nealson K.H."/>
            <person name="Fraser C.M."/>
        </authorList>
    </citation>
    <scope>NUCLEOTIDE SEQUENCE [LARGE SCALE GENOMIC DNA]</scope>
    <source>
        <strain>ATCC 700550 / JCM 31522 / CIP 106686 / LMG 19005 / NCIMB 14063 / MR-1</strain>
    </source>
</reference>
<accession>Q8EKR9</accession>
<comment type="function">
    <text evidence="1">Involved in the aerobic and anaerobic degradation of long-chain fatty acids via beta-oxidation cycle. Catalyzes the formation of 3-oxoacyl-CoA from enoyl-CoA via L-3-hydroxyacyl-CoA. It can also use D-3-hydroxyacyl-CoA and cis-3-enoyl-CoA as substrate.</text>
</comment>
<comment type="catalytic activity">
    <reaction evidence="1">
        <text>a (3S)-3-hydroxyacyl-CoA + NAD(+) = a 3-oxoacyl-CoA + NADH + H(+)</text>
        <dbReference type="Rhea" id="RHEA:22432"/>
        <dbReference type="ChEBI" id="CHEBI:15378"/>
        <dbReference type="ChEBI" id="CHEBI:57318"/>
        <dbReference type="ChEBI" id="CHEBI:57540"/>
        <dbReference type="ChEBI" id="CHEBI:57945"/>
        <dbReference type="ChEBI" id="CHEBI:90726"/>
        <dbReference type="EC" id="1.1.1.35"/>
    </reaction>
</comment>
<comment type="catalytic activity">
    <reaction evidence="1">
        <text>a (3S)-3-hydroxyacyl-CoA = a (2E)-enoyl-CoA + H2O</text>
        <dbReference type="Rhea" id="RHEA:16105"/>
        <dbReference type="ChEBI" id="CHEBI:15377"/>
        <dbReference type="ChEBI" id="CHEBI:57318"/>
        <dbReference type="ChEBI" id="CHEBI:58856"/>
        <dbReference type="EC" id="4.2.1.17"/>
    </reaction>
</comment>
<comment type="catalytic activity">
    <reaction evidence="1">
        <text>a 4-saturated-(3S)-3-hydroxyacyl-CoA = a (3E)-enoyl-CoA + H2O</text>
        <dbReference type="Rhea" id="RHEA:20724"/>
        <dbReference type="ChEBI" id="CHEBI:15377"/>
        <dbReference type="ChEBI" id="CHEBI:58521"/>
        <dbReference type="ChEBI" id="CHEBI:137480"/>
        <dbReference type="EC" id="4.2.1.17"/>
    </reaction>
</comment>
<comment type="catalytic activity">
    <reaction evidence="1">
        <text>(3S)-3-hydroxybutanoyl-CoA = (3R)-3-hydroxybutanoyl-CoA</text>
        <dbReference type="Rhea" id="RHEA:21760"/>
        <dbReference type="ChEBI" id="CHEBI:57315"/>
        <dbReference type="ChEBI" id="CHEBI:57316"/>
        <dbReference type="EC" id="5.1.2.3"/>
    </reaction>
</comment>
<comment type="catalytic activity">
    <reaction evidence="1">
        <text>a (3Z)-enoyl-CoA = a 4-saturated (2E)-enoyl-CoA</text>
        <dbReference type="Rhea" id="RHEA:45900"/>
        <dbReference type="ChEBI" id="CHEBI:85097"/>
        <dbReference type="ChEBI" id="CHEBI:85489"/>
        <dbReference type="EC" id="5.3.3.8"/>
    </reaction>
</comment>
<comment type="catalytic activity">
    <reaction evidence="1">
        <text>a (3E)-enoyl-CoA = a 4-saturated (2E)-enoyl-CoA</text>
        <dbReference type="Rhea" id="RHEA:45228"/>
        <dbReference type="ChEBI" id="CHEBI:58521"/>
        <dbReference type="ChEBI" id="CHEBI:85097"/>
        <dbReference type="EC" id="5.3.3.8"/>
    </reaction>
</comment>
<comment type="pathway">
    <text evidence="1">Lipid metabolism; fatty acid beta-oxidation.</text>
</comment>
<comment type="subunit">
    <text evidence="1">Heterotetramer of two alpha chains (FadB) and two beta chains (FadA).</text>
</comment>
<comment type="similarity">
    <text evidence="1">In the N-terminal section; belongs to the enoyl-CoA hydratase/isomerase family.</text>
</comment>
<comment type="similarity">
    <text evidence="1">In the C-terminal section; belongs to the 3-hydroxyacyl-CoA dehydrogenase family.</text>
</comment>
<name>FADB_SHEON</name>
<keyword id="KW-0276">Fatty acid metabolism</keyword>
<keyword id="KW-0413">Isomerase</keyword>
<keyword id="KW-0442">Lipid degradation</keyword>
<keyword id="KW-0443">Lipid metabolism</keyword>
<keyword id="KW-0456">Lyase</keyword>
<keyword id="KW-0511">Multifunctional enzyme</keyword>
<keyword id="KW-0520">NAD</keyword>
<keyword id="KW-0560">Oxidoreductase</keyword>
<keyword id="KW-1185">Reference proteome</keyword>
<protein>
    <recommendedName>
        <fullName evidence="1">Fatty acid oxidation complex subunit alpha</fullName>
    </recommendedName>
    <domain>
        <recommendedName>
            <fullName evidence="1">Enoyl-CoA hydratase/Delta(3)-cis-Delta(2)-trans-enoyl-CoA isomerase/3-hydroxybutyryl-CoA epimerase</fullName>
            <ecNumber evidence="1">4.2.1.17</ecNumber>
            <ecNumber evidence="1">5.1.2.3</ecNumber>
            <ecNumber evidence="1">5.3.3.8</ecNumber>
        </recommendedName>
    </domain>
    <domain>
        <recommendedName>
            <fullName evidence="1">3-hydroxyacyl-CoA dehydrogenase</fullName>
            <ecNumber evidence="1">1.1.1.35</ecNumber>
        </recommendedName>
    </domain>
</protein>
<organism>
    <name type="scientific">Shewanella oneidensis (strain ATCC 700550 / JCM 31522 / CIP 106686 / LMG 19005 / NCIMB 14063 / MR-1)</name>
    <dbReference type="NCBI Taxonomy" id="211586"/>
    <lineage>
        <taxon>Bacteria</taxon>
        <taxon>Pseudomonadati</taxon>
        <taxon>Pseudomonadota</taxon>
        <taxon>Gammaproteobacteria</taxon>
        <taxon>Alteromonadales</taxon>
        <taxon>Shewanellaceae</taxon>
        <taxon>Shewanella</taxon>
    </lineage>
</organism>
<feature type="chain" id="PRO_0000109288" description="Fatty acid oxidation complex subunit alpha">
    <location>
        <begin position="1"/>
        <end position="716"/>
    </location>
</feature>
<feature type="region of interest" description="Enoyl-CoA hydratase/isomerase" evidence="1">
    <location>
        <begin position="1"/>
        <end position="189"/>
    </location>
</feature>
<feature type="region of interest" description="3-hydroxyacyl-CoA dehydrogenase" evidence="1">
    <location>
        <begin position="311"/>
        <end position="716"/>
    </location>
</feature>
<feature type="active site" description="For 3-hydroxyacyl-CoA dehydrogenase activity" evidence="1">
    <location>
        <position position="450"/>
    </location>
</feature>
<feature type="binding site" evidence="1">
    <location>
        <position position="296"/>
    </location>
    <ligand>
        <name>substrate</name>
    </ligand>
</feature>
<feature type="binding site" evidence="1">
    <location>
        <position position="324"/>
    </location>
    <ligand>
        <name>NAD(+)</name>
        <dbReference type="ChEBI" id="CHEBI:57540"/>
    </ligand>
</feature>
<feature type="binding site" evidence="1">
    <location>
        <position position="343"/>
    </location>
    <ligand>
        <name>NAD(+)</name>
        <dbReference type="ChEBI" id="CHEBI:57540"/>
    </ligand>
</feature>
<feature type="binding site" evidence="1">
    <location>
        <begin position="400"/>
        <end position="402"/>
    </location>
    <ligand>
        <name>NAD(+)</name>
        <dbReference type="ChEBI" id="CHEBI:57540"/>
    </ligand>
</feature>
<feature type="binding site" evidence="1">
    <location>
        <position position="407"/>
    </location>
    <ligand>
        <name>NAD(+)</name>
        <dbReference type="ChEBI" id="CHEBI:57540"/>
    </ligand>
</feature>
<feature type="binding site" evidence="1">
    <location>
        <position position="429"/>
    </location>
    <ligand>
        <name>NAD(+)</name>
        <dbReference type="ChEBI" id="CHEBI:57540"/>
    </ligand>
</feature>
<feature type="binding site" evidence="1">
    <location>
        <position position="453"/>
    </location>
    <ligand>
        <name>NAD(+)</name>
        <dbReference type="ChEBI" id="CHEBI:57540"/>
    </ligand>
</feature>
<feature type="binding site" evidence="1">
    <location>
        <position position="500"/>
    </location>
    <ligand>
        <name>substrate</name>
    </ligand>
</feature>
<feature type="binding site" evidence="1">
    <location>
        <position position="660"/>
    </location>
    <ligand>
        <name>substrate</name>
    </ligand>
</feature>
<feature type="site" description="Important for catalytic activity" evidence="1">
    <location>
        <position position="119"/>
    </location>
</feature>
<feature type="site" description="Important for catalytic activity" evidence="1">
    <location>
        <position position="139"/>
    </location>
</feature>